<keyword id="KW-0025">Alternative splicing</keyword>
<keyword id="KW-0221">Differentiation</keyword>
<keyword id="KW-0225">Disease variant</keyword>
<keyword id="KW-1267">Proteomics identification</keyword>
<keyword id="KW-1185">Reference proteome</keyword>
<keyword id="KW-0677">Repeat</keyword>
<keyword id="KW-0744">Spermatogenesis</keyword>
<keyword id="KW-0802">TPR repeat</keyword>
<sequence length="1320" mass="150944">MSSNDSSLMAGIIYYSQEKYFHHVQQAAAVGLEKFSNDPVLKFFKAYGVLKEEHIQDAISDLESIRHHPDVSLCSTMALIYAHKRCEIIDREAIQELEYSLKEIRKTVSGTALYYAGLFLWLIGRHDKAKEYIDRMLKISRGFREAYVLRGWVDLTSDKPHTAKKAIEYLEQGIQDTKDVLGLMGKAMYFMMQQNYSEALEVVNQITVTSGSFLPALVLKMQLFLARQDWEQTVEMGHRILEKDESNIDACQILTVHELAREGNMTTVSSLKTQKATNHVRNLIKALETREPENPSLHLKKIIVVSRLCGSHQVILGLVCSFIERTFMATPSYVHVATELGYLFILKNQVKEALLWYSEAMKLDKDGMAGLTGIILCHILEGHLEEAEYRLEFLKEVQKSLGKSEVLIFLQALLMSRKHKGEEETTALLKEAVELHFSSMQGIPLGSEYFEKLDPYFLVCIAKEYLLFCPKQPRLPGQIVSPLLKQVAVILNPVVKAAPALIDPLYLMAQVRYYSELENAQSILQRCLELDPASVDAHLLMCQIYLAQGNFGMCFHCLELGVSHNFQVRDHPLYHLIKARALNKAGDYPEAIKTLKMVIKLPALKKEEGRKFLRPSVQPSQRASILLELVEALRLNGELHEATKVMQDTINEFGGTPEENRITIANVDLVLSKGNVDVALNMLRNILPKQSCYMEAREKMANIYLQTLRDRRLYIRCYRELCEHLPGPHTSLLLGDALMSILEPEKALEVYDEAYRQNPHDASLASRIGHAYVKAHQYTEAIEYYEAAQKINGQDFLCCDLGKLLLKLKKVNKAEKVLKQALEHDIVQDIPSMMNDVKCLLLLAKVYKSHKKEAVIETLNKALDLQSRILKRVPLEQPEMIPSQKQLAASICIQFAEHYLAEKEYDKAVQSYKDVFSYLPTDNKVMLELAQLYLLQGHLDLCEQHCAILLQTEQNHETASVLMADLMFRKQKHEAAINLYHQVLEKAPDNFLVLHKLIDLLRRSGKLEDIPAFFELAKKVSSRVPLEPGFNYCRGIYCWHIGQPNEALKFLNKARKDSTWGQSAIYHMVQICLNPDNEVVGGEAFENQGAESNYMEKKELEQQGVSTAEKLLREFYPHSDSSQTQLRLLQGLCRLATREKANMEAALGSFIQIAQAEKDSVPALLALAQAYVFLKQIPKARMQLKRLAKTPWVLSEAEDLEKSWLLLADIYCQGSKFDLALELLRRCVQYNKSCYKAYEYMGFIMEKEQSYKDAVTNYKLAWKYSHHANPAIGFKLAFNYLKDKKFVEAIEICNDVLREHPDYPKIREEILEKARRSLRP</sequence>
<organism>
    <name type="scientific">Homo sapiens</name>
    <name type="common">Human</name>
    <dbReference type="NCBI Taxonomy" id="9606"/>
    <lineage>
        <taxon>Eukaryota</taxon>
        <taxon>Metazoa</taxon>
        <taxon>Chordata</taxon>
        <taxon>Craniata</taxon>
        <taxon>Vertebrata</taxon>
        <taxon>Euteleostomi</taxon>
        <taxon>Mammalia</taxon>
        <taxon>Eutheria</taxon>
        <taxon>Euarchontoglires</taxon>
        <taxon>Primates</taxon>
        <taxon>Haplorrhini</taxon>
        <taxon>Catarrhini</taxon>
        <taxon>Hominidae</taxon>
        <taxon>Homo</taxon>
    </lineage>
</organism>
<reference key="1">
    <citation type="journal article" date="2003" name="Cancer Res.">
        <title>An integrated physical and gene map of the 3.5-Mb chromosome 3p21.3 (AP20) region implicated in major human epithelial malignancies.</title>
        <authorList>
            <person name="Protopopov A."/>
            <person name="Kashuba V."/>
            <person name="Zabarovska V.I."/>
            <person name="Muravenko O.V."/>
            <person name="Lerman M.I."/>
            <person name="Klein G."/>
            <person name="Zabarovsky E.R."/>
        </authorList>
    </citation>
    <scope>NUCLEOTIDE SEQUENCE [MRNA] (ISOFORM 1)</scope>
    <scope>TISSUE SPECIFICITY</scope>
    <scope>VARIANT LYS-1316</scope>
    <source>
        <tissue>Pancreas</tissue>
    </source>
</reference>
<reference key="2">
    <citation type="journal article" date="2004" name="Nat. Genet.">
        <title>Complete sequencing and characterization of 21,243 full-length human cDNAs.</title>
        <authorList>
            <person name="Ota T."/>
            <person name="Suzuki Y."/>
            <person name="Nishikawa T."/>
            <person name="Otsuki T."/>
            <person name="Sugiyama T."/>
            <person name="Irie R."/>
            <person name="Wakamatsu A."/>
            <person name="Hayashi K."/>
            <person name="Sato H."/>
            <person name="Nagai K."/>
            <person name="Kimura K."/>
            <person name="Makita H."/>
            <person name="Sekine M."/>
            <person name="Obayashi M."/>
            <person name="Nishi T."/>
            <person name="Shibahara T."/>
            <person name="Tanaka T."/>
            <person name="Ishii S."/>
            <person name="Yamamoto J."/>
            <person name="Saito K."/>
            <person name="Kawai Y."/>
            <person name="Isono Y."/>
            <person name="Nakamura Y."/>
            <person name="Nagahari K."/>
            <person name="Murakami K."/>
            <person name="Yasuda T."/>
            <person name="Iwayanagi T."/>
            <person name="Wagatsuma M."/>
            <person name="Shiratori A."/>
            <person name="Sudo H."/>
            <person name="Hosoiri T."/>
            <person name="Kaku Y."/>
            <person name="Kodaira H."/>
            <person name="Kondo H."/>
            <person name="Sugawara M."/>
            <person name="Takahashi M."/>
            <person name="Kanda K."/>
            <person name="Yokoi T."/>
            <person name="Furuya T."/>
            <person name="Kikkawa E."/>
            <person name="Omura Y."/>
            <person name="Abe K."/>
            <person name="Kamihara K."/>
            <person name="Katsuta N."/>
            <person name="Sato K."/>
            <person name="Tanikawa M."/>
            <person name="Yamazaki M."/>
            <person name="Ninomiya K."/>
            <person name="Ishibashi T."/>
            <person name="Yamashita H."/>
            <person name="Murakawa K."/>
            <person name="Fujimori K."/>
            <person name="Tanai H."/>
            <person name="Kimata M."/>
            <person name="Watanabe M."/>
            <person name="Hiraoka S."/>
            <person name="Chiba Y."/>
            <person name="Ishida S."/>
            <person name="Ono Y."/>
            <person name="Takiguchi S."/>
            <person name="Watanabe S."/>
            <person name="Yosida M."/>
            <person name="Hotuta T."/>
            <person name="Kusano J."/>
            <person name="Kanehori K."/>
            <person name="Takahashi-Fujii A."/>
            <person name="Hara H."/>
            <person name="Tanase T.-O."/>
            <person name="Nomura Y."/>
            <person name="Togiya S."/>
            <person name="Komai F."/>
            <person name="Hara R."/>
            <person name="Takeuchi K."/>
            <person name="Arita M."/>
            <person name="Imose N."/>
            <person name="Musashino K."/>
            <person name="Yuuki H."/>
            <person name="Oshima A."/>
            <person name="Sasaki N."/>
            <person name="Aotsuka S."/>
            <person name="Yoshikawa Y."/>
            <person name="Matsunawa H."/>
            <person name="Ichihara T."/>
            <person name="Shiohata N."/>
            <person name="Sano S."/>
            <person name="Moriya S."/>
            <person name="Momiyama H."/>
            <person name="Satoh N."/>
            <person name="Takami S."/>
            <person name="Terashima Y."/>
            <person name="Suzuki O."/>
            <person name="Nakagawa S."/>
            <person name="Senoh A."/>
            <person name="Mizoguchi H."/>
            <person name="Goto Y."/>
            <person name="Shimizu F."/>
            <person name="Wakebe H."/>
            <person name="Hishigaki H."/>
            <person name="Watanabe T."/>
            <person name="Sugiyama A."/>
            <person name="Takemoto M."/>
            <person name="Kawakami B."/>
            <person name="Yamazaki M."/>
            <person name="Watanabe K."/>
            <person name="Kumagai A."/>
            <person name="Itakura S."/>
            <person name="Fukuzumi Y."/>
            <person name="Fujimori Y."/>
            <person name="Komiyama M."/>
            <person name="Tashiro H."/>
            <person name="Tanigami A."/>
            <person name="Fujiwara T."/>
            <person name="Ono T."/>
            <person name="Yamada K."/>
            <person name="Fujii Y."/>
            <person name="Ozaki K."/>
            <person name="Hirao M."/>
            <person name="Ohmori Y."/>
            <person name="Kawabata A."/>
            <person name="Hikiji T."/>
            <person name="Kobatake N."/>
            <person name="Inagaki H."/>
            <person name="Ikema Y."/>
            <person name="Okamoto S."/>
            <person name="Okitani R."/>
            <person name="Kawakami T."/>
            <person name="Noguchi S."/>
            <person name="Itoh T."/>
            <person name="Shigeta K."/>
            <person name="Senba T."/>
            <person name="Matsumura K."/>
            <person name="Nakajima Y."/>
            <person name="Mizuno T."/>
            <person name="Morinaga M."/>
            <person name="Sasaki M."/>
            <person name="Togashi T."/>
            <person name="Oyama M."/>
            <person name="Hata H."/>
            <person name="Watanabe M."/>
            <person name="Komatsu T."/>
            <person name="Mizushima-Sugano J."/>
            <person name="Satoh T."/>
            <person name="Shirai Y."/>
            <person name="Takahashi Y."/>
            <person name="Nakagawa K."/>
            <person name="Okumura K."/>
            <person name="Nagase T."/>
            <person name="Nomura N."/>
            <person name="Kikuchi H."/>
            <person name="Masuho Y."/>
            <person name="Yamashita R."/>
            <person name="Nakai K."/>
            <person name="Yada T."/>
            <person name="Nakamura Y."/>
            <person name="Ohara O."/>
            <person name="Isogai T."/>
            <person name="Sugano S."/>
        </authorList>
    </citation>
    <scope>NUCLEOTIDE SEQUENCE [LARGE SCALE MRNA] (ISOFORM 3)</scope>
    <scope>NUCLEOTIDE SEQUENCE [LARGE SCALE MRNA] (ISOFORM 5)</scope>
    <scope>NUCLEOTIDE SEQUENCE [LARGE SCALE MRNA] OF 440-1320 (ISOFORMS 5/6/7)</scope>
    <scope>VARIANT LEU-1055</scope>
    <source>
        <tissue>Testis</tissue>
    </source>
</reference>
<reference key="3">
    <citation type="journal article" date="2006" name="Nature">
        <title>The DNA sequence, annotation and analysis of human chromosome 3.</title>
        <authorList>
            <person name="Muzny D.M."/>
            <person name="Scherer S.E."/>
            <person name="Kaul R."/>
            <person name="Wang J."/>
            <person name="Yu J."/>
            <person name="Sudbrak R."/>
            <person name="Buhay C.J."/>
            <person name="Chen R."/>
            <person name="Cree A."/>
            <person name="Ding Y."/>
            <person name="Dugan-Rocha S."/>
            <person name="Gill R."/>
            <person name="Gunaratne P."/>
            <person name="Harris R.A."/>
            <person name="Hawes A.C."/>
            <person name="Hernandez J."/>
            <person name="Hodgson A.V."/>
            <person name="Hume J."/>
            <person name="Jackson A."/>
            <person name="Khan Z.M."/>
            <person name="Kovar-Smith C."/>
            <person name="Lewis L.R."/>
            <person name="Lozado R.J."/>
            <person name="Metzker M.L."/>
            <person name="Milosavljevic A."/>
            <person name="Miner G.R."/>
            <person name="Morgan M.B."/>
            <person name="Nazareth L.V."/>
            <person name="Scott G."/>
            <person name="Sodergren E."/>
            <person name="Song X.-Z."/>
            <person name="Steffen D."/>
            <person name="Wei S."/>
            <person name="Wheeler D.A."/>
            <person name="Wright M.W."/>
            <person name="Worley K.C."/>
            <person name="Yuan Y."/>
            <person name="Zhang Z."/>
            <person name="Adams C.Q."/>
            <person name="Ansari-Lari M.A."/>
            <person name="Ayele M."/>
            <person name="Brown M.J."/>
            <person name="Chen G."/>
            <person name="Chen Z."/>
            <person name="Clendenning J."/>
            <person name="Clerc-Blankenburg K.P."/>
            <person name="Chen R."/>
            <person name="Chen Z."/>
            <person name="Davis C."/>
            <person name="Delgado O."/>
            <person name="Dinh H.H."/>
            <person name="Dong W."/>
            <person name="Draper H."/>
            <person name="Ernst S."/>
            <person name="Fu G."/>
            <person name="Gonzalez-Garay M.L."/>
            <person name="Garcia D.K."/>
            <person name="Gillett W."/>
            <person name="Gu J."/>
            <person name="Hao B."/>
            <person name="Haugen E."/>
            <person name="Havlak P."/>
            <person name="He X."/>
            <person name="Hennig S."/>
            <person name="Hu S."/>
            <person name="Huang W."/>
            <person name="Jackson L.R."/>
            <person name="Jacob L.S."/>
            <person name="Kelly S.H."/>
            <person name="Kube M."/>
            <person name="Levy R."/>
            <person name="Li Z."/>
            <person name="Liu B."/>
            <person name="Liu J."/>
            <person name="Liu W."/>
            <person name="Lu J."/>
            <person name="Maheshwari M."/>
            <person name="Nguyen B.-V."/>
            <person name="Okwuonu G.O."/>
            <person name="Palmeiri A."/>
            <person name="Pasternak S."/>
            <person name="Perez L.M."/>
            <person name="Phelps K.A."/>
            <person name="Plopper F.J."/>
            <person name="Qiang B."/>
            <person name="Raymond C."/>
            <person name="Rodriguez R."/>
            <person name="Saenphimmachak C."/>
            <person name="Santibanez J."/>
            <person name="Shen H."/>
            <person name="Shen Y."/>
            <person name="Subramanian S."/>
            <person name="Tabor P.E."/>
            <person name="Verduzco D."/>
            <person name="Waldron L."/>
            <person name="Wang J."/>
            <person name="Wang J."/>
            <person name="Wang Q."/>
            <person name="Williams G.A."/>
            <person name="Wong G.K.-S."/>
            <person name="Yao Z."/>
            <person name="Zhang J."/>
            <person name="Zhang X."/>
            <person name="Zhao G."/>
            <person name="Zhou J."/>
            <person name="Zhou Y."/>
            <person name="Nelson D."/>
            <person name="Lehrach H."/>
            <person name="Reinhardt R."/>
            <person name="Naylor S.L."/>
            <person name="Yang H."/>
            <person name="Olson M."/>
            <person name="Weinstock G."/>
            <person name="Gibbs R.A."/>
        </authorList>
    </citation>
    <scope>NUCLEOTIDE SEQUENCE [LARGE SCALE GENOMIC DNA]</scope>
</reference>
<reference key="4">
    <citation type="journal article" date="2019" name="Am. J. Hum. Genet.">
        <title>Bi-allelic mutations in TTC21A induce asthenoteratospermia in humans and mice.</title>
        <authorList>
            <person name="Liu W."/>
            <person name="He X."/>
            <person name="Yang S."/>
            <person name="Zouari R."/>
            <person name="Wang J."/>
            <person name="Wu H."/>
            <person name="Kherraf Z.E."/>
            <person name="Liu C."/>
            <person name="Coutton C."/>
            <person name="Zhao R."/>
            <person name="Tang D."/>
            <person name="Tang S."/>
            <person name="Lv M."/>
            <person name="Fang Y."/>
            <person name="Li W."/>
            <person name="Li H."/>
            <person name="Zhao J."/>
            <person name="Wang X."/>
            <person name="Zhao S."/>
            <person name="Zhang J."/>
            <person name="Arnoult C."/>
            <person name="Jin L."/>
            <person name="Zhang Z."/>
            <person name="Ray P.F."/>
            <person name="Cao Y."/>
            <person name="Zhang F."/>
        </authorList>
    </citation>
    <scope>INVOLVEMENT IN SPGF37</scope>
    <scope>VARIANTS SPGF37 CYS-114 AND 777-GLN--PRO-1320 DEL</scope>
    <scope>FUNCTION</scope>
    <scope>DEVELOPMENTAL STAGE</scope>
    <scope>INTERACTION WITH IFT20; IFT52 AND IFT140</scope>
</reference>
<proteinExistence type="evidence at protein level"/>
<accession>Q8NDW8</accession>
<accession>A1L388</accession>
<accession>B4DYF6</accession>
<accession>B4DYJ3</accession>
<accession>D3YTE7</accession>
<accession>D4PHA5</accession>
<accession>Q6P5W8</accession>
<accession>Q8N7G5</accession>
<accession>Q8NA02</accession>
<protein>
    <recommendedName>
        <fullName evidence="7">Tetratricopeptide repeat protein 21A</fullName>
        <shortName evidence="7">TPR repeat protein 21A</shortName>
    </recommendedName>
    <alternativeName>
        <fullName evidence="5">Stress-inducible protein 2</fullName>
    </alternativeName>
</protein>
<dbReference type="EMBL" id="AJ487015">
    <property type="protein sequence ID" value="CAD31647.1"/>
    <property type="molecule type" value="mRNA"/>
</dbReference>
<dbReference type="EMBL" id="AK093313">
    <property type="protein sequence ID" value="BAC04129.1"/>
    <property type="status" value="ALT_INIT"/>
    <property type="molecule type" value="mRNA"/>
</dbReference>
<dbReference type="EMBL" id="AK098528">
    <property type="protein sequence ID" value="BAC05323.1"/>
    <property type="molecule type" value="mRNA"/>
</dbReference>
<dbReference type="EMBL" id="AK302408">
    <property type="protein sequence ID" value="BAG63718.1"/>
    <property type="molecule type" value="mRNA"/>
</dbReference>
<dbReference type="EMBL" id="AK302465">
    <property type="protein sequence ID" value="BAG63755.1"/>
    <property type="molecule type" value="mRNA"/>
</dbReference>
<dbReference type="EMBL" id="AC092053">
    <property type="status" value="NOT_ANNOTATED_CDS"/>
    <property type="molecule type" value="Genomic_DNA"/>
</dbReference>
<dbReference type="EMBL" id="AC138124">
    <property type="status" value="NOT_ANNOTATED_CDS"/>
    <property type="molecule type" value="Genomic_DNA"/>
</dbReference>
<dbReference type="CCDS" id="CCDS43068.2">
    <molecule id="Q8NDW8-6"/>
</dbReference>
<dbReference type="CCDS" id="CCDS46800.1">
    <molecule id="Q8NDW8-1"/>
</dbReference>
<dbReference type="RefSeq" id="NP_001098983.2">
    <molecule id="Q8NDW8-6"/>
    <property type="nucleotide sequence ID" value="NM_001105513.3"/>
</dbReference>
<dbReference type="RefSeq" id="NP_001353828.1">
    <molecule id="Q8NDW8-7"/>
    <property type="nucleotide sequence ID" value="NM_001366899.1"/>
</dbReference>
<dbReference type="RefSeq" id="NP_665698.2">
    <molecule id="Q8NDW8-1"/>
    <property type="nucleotide sequence ID" value="NM_145755.3"/>
</dbReference>
<dbReference type="SMR" id="Q8NDW8"/>
<dbReference type="BioGRID" id="128260">
    <property type="interactions" value="14"/>
</dbReference>
<dbReference type="FunCoup" id="Q8NDW8">
    <property type="interactions" value="16"/>
</dbReference>
<dbReference type="IntAct" id="Q8NDW8">
    <property type="interactions" value="7"/>
</dbReference>
<dbReference type="STRING" id="9606.ENSP00000398211"/>
<dbReference type="GlyGen" id="Q8NDW8">
    <property type="glycosylation" value="3 sites, 1 O-linked glycan (2 sites)"/>
</dbReference>
<dbReference type="iPTMnet" id="Q8NDW8"/>
<dbReference type="PhosphoSitePlus" id="Q8NDW8"/>
<dbReference type="BioMuta" id="TTC21A"/>
<dbReference type="DMDM" id="296453007"/>
<dbReference type="jPOST" id="Q8NDW8"/>
<dbReference type="MassIVE" id="Q8NDW8"/>
<dbReference type="PaxDb" id="9606-ENSP00000398211"/>
<dbReference type="PeptideAtlas" id="Q8NDW8"/>
<dbReference type="ProteomicsDB" id="73070">
    <molecule id="Q8NDW8-1"/>
</dbReference>
<dbReference type="ProteomicsDB" id="73071">
    <molecule id="Q8NDW8-3"/>
</dbReference>
<dbReference type="ProteomicsDB" id="73072">
    <molecule id="Q8NDW8-5"/>
</dbReference>
<dbReference type="ProteomicsDB" id="73073">
    <molecule id="Q8NDW8-6"/>
</dbReference>
<dbReference type="ProteomicsDB" id="73074">
    <molecule id="Q8NDW8-7"/>
</dbReference>
<dbReference type="TopDownProteomics" id="Q8NDW8-6">
    <molecule id="Q8NDW8-6"/>
</dbReference>
<dbReference type="Antibodypedia" id="50732">
    <property type="antibodies" value="7 antibodies from 6 providers"/>
</dbReference>
<dbReference type="DNASU" id="199223"/>
<dbReference type="Ensembl" id="ENST00000431162.6">
    <molecule id="Q8NDW8-1"/>
    <property type="protein sequence ID" value="ENSP00000398211.2"/>
    <property type="gene ID" value="ENSG00000168026.19"/>
</dbReference>
<dbReference type="Ensembl" id="ENST00000440121.1">
    <molecule id="Q8NDW8-6"/>
    <property type="protein sequence ID" value="ENSP00000410882.1"/>
    <property type="gene ID" value="ENSG00000168026.19"/>
</dbReference>
<dbReference type="GeneID" id="199223"/>
<dbReference type="KEGG" id="hsa:199223"/>
<dbReference type="UCSC" id="uc003cjc.3">
    <molecule id="Q8NDW8-1"/>
    <property type="organism name" value="human"/>
</dbReference>
<dbReference type="AGR" id="HGNC:30761"/>
<dbReference type="CTD" id="199223"/>
<dbReference type="DisGeNET" id="199223"/>
<dbReference type="GeneCards" id="TTC21A"/>
<dbReference type="HGNC" id="HGNC:30761">
    <property type="gene designation" value="TTC21A"/>
</dbReference>
<dbReference type="HPA" id="ENSG00000168026">
    <property type="expression patterns" value="Tissue enriched (testis)"/>
</dbReference>
<dbReference type="MalaCards" id="TTC21A"/>
<dbReference type="MIM" id="611430">
    <property type="type" value="gene"/>
</dbReference>
<dbReference type="MIM" id="618429">
    <property type="type" value="phenotype"/>
</dbReference>
<dbReference type="neXtProt" id="NX_Q8NDW8"/>
<dbReference type="OpenTargets" id="ENSG00000168026"/>
<dbReference type="Orphanet" id="276234">
    <property type="disease" value="Non-syndromic male infertility due to sperm motility disorder"/>
</dbReference>
<dbReference type="PharmGKB" id="PA134915959"/>
<dbReference type="VEuPathDB" id="HostDB:ENSG00000168026"/>
<dbReference type="eggNOG" id="ENOG502QQAB">
    <property type="taxonomic scope" value="Eukaryota"/>
</dbReference>
<dbReference type="GeneTree" id="ENSGT00390000005979"/>
<dbReference type="HOGENOM" id="CLU_006149_0_0_1"/>
<dbReference type="InParanoid" id="Q8NDW8"/>
<dbReference type="OMA" id="QCPCLAG"/>
<dbReference type="OrthoDB" id="10259630at2759"/>
<dbReference type="PAN-GO" id="Q8NDW8">
    <property type="GO annotations" value="3 GO annotations based on evolutionary models"/>
</dbReference>
<dbReference type="PhylomeDB" id="Q8NDW8"/>
<dbReference type="TreeFam" id="TF314664"/>
<dbReference type="PathwayCommons" id="Q8NDW8"/>
<dbReference type="SignaLink" id="Q8NDW8"/>
<dbReference type="BioGRID-ORCS" id="199223">
    <property type="hits" value="10 hits in 1146 CRISPR screens"/>
</dbReference>
<dbReference type="ChiTaRS" id="TTC21A">
    <property type="organism name" value="human"/>
</dbReference>
<dbReference type="GenomeRNAi" id="199223"/>
<dbReference type="Pharos" id="Q8NDW8">
    <property type="development level" value="Tdark"/>
</dbReference>
<dbReference type="PRO" id="PR:Q8NDW8"/>
<dbReference type="Proteomes" id="UP000005640">
    <property type="component" value="Chromosome 3"/>
</dbReference>
<dbReference type="RNAct" id="Q8NDW8">
    <property type="molecule type" value="protein"/>
</dbReference>
<dbReference type="Bgee" id="ENSG00000168026">
    <property type="expression patterns" value="Expressed in right uterine tube and 108 other cell types or tissues"/>
</dbReference>
<dbReference type="ExpressionAtlas" id="Q8NDW8">
    <property type="expression patterns" value="baseline and differential"/>
</dbReference>
<dbReference type="GO" id="GO:0005929">
    <property type="term" value="C:cilium"/>
    <property type="evidence" value="ECO:0007669"/>
    <property type="project" value="GOC"/>
</dbReference>
<dbReference type="GO" id="GO:0030991">
    <property type="term" value="C:intraciliary transport particle A"/>
    <property type="evidence" value="ECO:0000318"/>
    <property type="project" value="GO_Central"/>
</dbReference>
<dbReference type="GO" id="GO:0030317">
    <property type="term" value="P:flagellated sperm motility"/>
    <property type="evidence" value="ECO:0000315"/>
    <property type="project" value="UniProtKB"/>
</dbReference>
<dbReference type="GO" id="GO:0035721">
    <property type="term" value="P:intraciliary retrograde transport"/>
    <property type="evidence" value="ECO:0000318"/>
    <property type="project" value="GO_Central"/>
</dbReference>
<dbReference type="GO" id="GO:0061512">
    <property type="term" value="P:protein localization to cilium"/>
    <property type="evidence" value="ECO:0000318"/>
    <property type="project" value="GO_Central"/>
</dbReference>
<dbReference type="GO" id="GO:0007286">
    <property type="term" value="P:spermatid development"/>
    <property type="evidence" value="ECO:0000315"/>
    <property type="project" value="UniProtKB"/>
</dbReference>
<dbReference type="FunFam" id="1.25.40.10:FF:001960">
    <property type="entry name" value="Tetratricopeptide repeat domain 21A"/>
    <property type="match status" value="1"/>
</dbReference>
<dbReference type="FunFam" id="1.25.40.10:FF:002178">
    <property type="entry name" value="Tetratricopeptide repeat domain 21A"/>
    <property type="match status" value="1"/>
</dbReference>
<dbReference type="FunFam" id="1.25.40.10:FF:000245">
    <property type="entry name" value="Tetratricopeptide repeat domain 21B"/>
    <property type="match status" value="1"/>
</dbReference>
<dbReference type="FunFam" id="1.25.40.10:FF:000377">
    <property type="entry name" value="Tetratricopeptide repeat domain 21B"/>
    <property type="match status" value="1"/>
</dbReference>
<dbReference type="Gene3D" id="1.25.40.10">
    <property type="entry name" value="Tetratricopeptide repeat domain"/>
    <property type="match status" value="6"/>
</dbReference>
<dbReference type="InterPro" id="IPR056832">
    <property type="entry name" value="ARM_TT21_2nd"/>
</dbReference>
<dbReference type="InterPro" id="IPR056836">
    <property type="entry name" value="ARM_TT21_4th"/>
</dbReference>
<dbReference type="InterPro" id="IPR056835">
    <property type="entry name" value="ARM_TT21_5th"/>
</dbReference>
<dbReference type="InterPro" id="IPR056834">
    <property type="entry name" value="ARM_TT21_C"/>
</dbReference>
<dbReference type="InterPro" id="IPR056833">
    <property type="entry name" value="ARM_TT21_N"/>
</dbReference>
<dbReference type="InterPro" id="IPR011990">
    <property type="entry name" value="TPR-like_helical_dom_sf"/>
</dbReference>
<dbReference type="InterPro" id="IPR019734">
    <property type="entry name" value="TPR_rpt"/>
</dbReference>
<dbReference type="InterPro" id="IPR040364">
    <property type="entry name" value="TTC21A/TTC21B"/>
</dbReference>
<dbReference type="PANTHER" id="PTHR14699">
    <property type="entry name" value="STI2 PROTEIN-RELATED"/>
    <property type="match status" value="1"/>
</dbReference>
<dbReference type="PANTHER" id="PTHR14699:SF2">
    <property type="entry name" value="TETRATRICOPEPTIDE REPEAT PROTEIN 21A"/>
    <property type="match status" value="1"/>
</dbReference>
<dbReference type="Pfam" id="PF25058">
    <property type="entry name" value="ARM_TT21"/>
    <property type="match status" value="1"/>
</dbReference>
<dbReference type="Pfam" id="PF25060">
    <property type="entry name" value="ARM_TT21_2nd"/>
    <property type="match status" value="1"/>
</dbReference>
<dbReference type="Pfam" id="PF25068">
    <property type="entry name" value="ARM_TT21_4th"/>
    <property type="match status" value="1"/>
</dbReference>
<dbReference type="Pfam" id="PF25064">
    <property type="entry name" value="ARM_TT21_5th"/>
    <property type="match status" value="1"/>
</dbReference>
<dbReference type="Pfam" id="PF25063">
    <property type="entry name" value="ARM_TT21_C"/>
    <property type="match status" value="1"/>
</dbReference>
<dbReference type="Pfam" id="PF25062">
    <property type="entry name" value="ARM_TT21_N"/>
    <property type="match status" value="1"/>
</dbReference>
<dbReference type="SMART" id="SM00028">
    <property type="entry name" value="TPR"/>
    <property type="match status" value="13"/>
</dbReference>
<dbReference type="SUPFAM" id="SSF48452">
    <property type="entry name" value="TPR-like"/>
    <property type="match status" value="4"/>
</dbReference>
<dbReference type="PROSITE" id="PS50005">
    <property type="entry name" value="TPR"/>
    <property type="match status" value="9"/>
</dbReference>
<dbReference type="PROSITE" id="PS50293">
    <property type="entry name" value="TPR_REGION"/>
    <property type="match status" value="4"/>
</dbReference>
<name>TT21A_HUMAN</name>
<feature type="chain" id="PRO_0000291915" description="Tetratricopeptide repeat protein 21A">
    <location>
        <begin position="1"/>
        <end position="1320"/>
    </location>
</feature>
<feature type="repeat" description="TPR 1">
    <location>
        <begin position="4"/>
        <end position="38"/>
    </location>
</feature>
<feature type="repeat" description="TPR 2">
    <location>
        <begin position="110"/>
        <end position="143"/>
    </location>
</feature>
<feature type="repeat" description="TPR 3">
    <location>
        <begin position="146"/>
        <end position="180"/>
    </location>
</feature>
<feature type="repeat" description="TPR 4">
    <location>
        <begin position="181"/>
        <end position="213"/>
    </location>
</feature>
<feature type="repeat" description="TPR 5">
    <location>
        <begin position="215"/>
        <end position="247"/>
    </location>
</feature>
<feature type="repeat" description="TPR 6">
    <location>
        <begin position="334"/>
        <end position="367"/>
    </location>
</feature>
<feature type="repeat" description="TPR 7">
    <location>
        <begin position="502"/>
        <end position="534"/>
    </location>
</feature>
<feature type="repeat" description="TPR 8">
    <location>
        <begin position="572"/>
        <end position="605"/>
    </location>
</feature>
<feature type="repeat" description="TPR 9">
    <location>
        <begin position="728"/>
        <end position="761"/>
    </location>
</feature>
<feature type="repeat" description="TPR 10">
    <location>
        <begin position="762"/>
        <end position="795"/>
    </location>
</feature>
<feature type="repeat" description="TPR 11">
    <location>
        <begin position="797"/>
        <end position="828"/>
    </location>
</feature>
<feature type="repeat" description="TPR 12">
    <location>
        <begin position="837"/>
        <end position="869"/>
    </location>
</feature>
<feature type="repeat" description="TPR 13">
    <location>
        <begin position="889"/>
        <end position="922"/>
    </location>
</feature>
<feature type="repeat" description="TPR 14">
    <location>
        <begin position="924"/>
        <end position="956"/>
    </location>
</feature>
<feature type="repeat" description="TPR 15">
    <location>
        <begin position="957"/>
        <end position="990"/>
    </location>
</feature>
<feature type="repeat" description="TPR 16">
    <location>
        <begin position="1028"/>
        <end position="1061"/>
    </location>
</feature>
<feature type="repeat" description="TPR 17">
    <location>
        <begin position="1201"/>
        <end position="1234"/>
    </location>
</feature>
<feature type="repeat" description="TPR 18">
    <location>
        <begin position="1236"/>
        <end position="1268"/>
    </location>
</feature>
<feature type="repeat" description="TPR 19">
    <location>
        <begin position="1270"/>
        <end position="1303"/>
    </location>
</feature>
<feature type="splice variant" id="VSP_026297" description="In isoform 3." evidence="6">
    <location>
        <begin position="1"/>
        <end position="879"/>
    </location>
</feature>
<feature type="splice variant" id="VSP_038428" description="In isoform 6." evidence="8">
    <location>
        <begin position="147"/>
        <end position="187"/>
    </location>
</feature>
<feature type="splice variant" id="VSP_038429" description="In isoform 5 and isoform 6." evidence="6">
    <location>
        <begin position="268"/>
        <end position="275"/>
    </location>
</feature>
<feature type="splice variant" id="VSP_038430" description="In isoform 5." evidence="6">
    <location>
        <begin position="386"/>
        <end position="396"/>
    </location>
</feature>
<feature type="splice variant" id="VSP_038431" description="In isoform 5, isoform 6 and isoform 7." evidence="6">
    <original>S</original>
    <variation>SG</variation>
    <location>
        <position position="515"/>
    </location>
</feature>
<feature type="sequence variant" id="VAR_032879" description="In dbSNP:rs1112438.">
    <original>R</original>
    <variation>Q</variation>
    <location>
        <position position="91"/>
    </location>
</feature>
<feature type="sequence variant" id="VAR_032880" description="In dbSNP:rs17855763.">
    <original>V</original>
    <variation>L</variation>
    <location>
        <position position="108"/>
    </location>
</feature>
<feature type="sequence variant" id="VAR_082207" description="In SPGF37; dbSNP:rs750057655." evidence="4">
    <original>Y</original>
    <variation>C</variation>
    <location>
        <position position="114"/>
    </location>
</feature>
<feature type="sequence variant" id="VAR_032881" description="In dbSNP:rs1274972.">
    <original>R</original>
    <variation>K</variation>
    <location>
        <position position="290"/>
    </location>
</feature>
<feature type="sequence variant" id="VAR_032882" description="In dbSNP:rs1274971.">
    <original>E</original>
    <variation>K</variation>
    <location>
        <position position="293"/>
    </location>
</feature>
<feature type="sequence variant" id="VAR_032883" description="In dbSNP:rs35581078.">
    <original>R</original>
    <variation>W</variation>
    <location>
        <position position="622"/>
    </location>
</feature>
<feature type="sequence variant" id="VAR_059861" description="In dbSNP:rs9861353.">
    <original>R</original>
    <variation>H</variation>
    <location>
        <position position="719"/>
    </location>
</feature>
<feature type="sequence variant" id="VAR_032884" description="In dbSNP:rs9861353.">
    <original>R</original>
    <variation>Q</variation>
    <location>
        <position position="719"/>
    </location>
</feature>
<feature type="sequence variant" id="VAR_082208" description="In SPGF37." evidence="4">
    <location>
        <begin position="777"/>
        <end position="1320"/>
    </location>
</feature>
<feature type="sequence variant" id="VAR_032885" description="In dbSNP:rs35934336." evidence="3">
    <original>R</original>
    <variation>L</variation>
    <location>
        <position position="1055"/>
    </location>
</feature>
<feature type="sequence variant" id="VAR_032886" description="In dbSNP:rs34201693.">
    <original>S</original>
    <variation>R</variation>
    <location>
        <position position="1160"/>
    </location>
</feature>
<feature type="sequence variant" id="VAR_032887" description="In dbSNP:rs704959." evidence="2">
    <original>R</original>
    <variation>K</variation>
    <location>
        <position position="1316"/>
    </location>
</feature>
<feature type="sequence conflict" description="In Ref. 1; CAD31647." evidence="8" ref="1">
    <original>V</original>
    <variation>G</variation>
    <location>
        <position position="153"/>
    </location>
</feature>
<feature type="sequence conflict" description="In Ref. 2; BAG63718." evidence="8" ref="2">
    <original>I</original>
    <variation>T</variation>
    <location>
        <position position="174"/>
    </location>
</feature>
<feature type="sequence conflict" description="In Ref. 2; BAG63755." evidence="8" ref="2">
    <original>G</original>
    <variation>D</variation>
    <location>
        <position position="802"/>
    </location>
</feature>
<feature type="sequence conflict" description="In Ref. 1; CAD31647." evidence="8" ref="1">
    <original>K</original>
    <variation>E</variation>
    <location>
        <position position="803"/>
    </location>
</feature>
<feature type="sequence conflict" description="In Ref. 2; BAG63718." evidence="8" ref="2">
    <original>K</original>
    <variation>R</variation>
    <location>
        <position position="838"/>
    </location>
</feature>
<feature type="sequence conflict" description="In Ref. 1; CAD31647." evidence="8" ref="1">
    <original>M</original>
    <variation>T</variation>
    <location>
        <position position="1095"/>
    </location>
</feature>
<feature type="sequence conflict" description="In Ref. 2; BAC04129." evidence="8" ref="2">
    <original>L</original>
    <variation>P</variation>
    <location>
        <position position="1165"/>
    </location>
</feature>
<feature type="sequence conflict" description="In Ref. 2; BAG63755." evidence="8" ref="2">
    <original>E</original>
    <variation>K</variation>
    <location>
        <position position="1291"/>
    </location>
</feature>
<gene>
    <name evidence="7 9" type="primary">TTC21A</name>
    <name evidence="5" type="synonym">STI2</name>
</gene>
<evidence type="ECO:0000250" key="1">
    <source>
        <dbReference type="UniProtKB" id="Q8C0S4"/>
    </source>
</evidence>
<evidence type="ECO:0000269" key="2">
    <source>
    </source>
</evidence>
<evidence type="ECO:0000269" key="3">
    <source>
    </source>
</evidence>
<evidence type="ECO:0000269" key="4">
    <source>
    </source>
</evidence>
<evidence type="ECO:0000303" key="5">
    <source>
    </source>
</evidence>
<evidence type="ECO:0000303" key="6">
    <source>
    </source>
</evidence>
<evidence type="ECO:0000303" key="7">
    <source>
    </source>
</evidence>
<evidence type="ECO:0000305" key="8"/>
<evidence type="ECO:0000312" key="9">
    <source>
        <dbReference type="HGNC" id="HGNC:30761"/>
    </source>
</evidence>
<comment type="function">
    <text evidence="4">Intraflagellar transport (IFT)-associated protein required for spermatogenesis (PubMed:30929735). Required for sperm flagellar formation and intraflagellar transport (PubMed:30929735).</text>
</comment>
<comment type="subunit">
    <text evidence="1 4">Interacts with IFT20 (PubMed:30929735). Interacts with IFT52 (PubMed:30929735). Interacts with IFT140 (PubMed:30929735). Interacts with CEP78; regulating IFT20 stability and localization (By similarity).</text>
</comment>
<comment type="alternative products">
    <event type="alternative splicing"/>
    <isoform>
        <id>Q8NDW8-1</id>
        <name>1</name>
        <sequence type="displayed"/>
    </isoform>
    <isoform>
        <id>Q8NDW8-3</id>
        <name>3</name>
        <sequence type="described" ref="VSP_026297"/>
    </isoform>
    <isoform>
        <id>Q8NDW8-5</id>
        <name>5</name>
        <sequence type="described" ref="VSP_038429 VSP_038430 VSP_038431"/>
    </isoform>
    <isoform>
        <id>Q8NDW8-6</id>
        <name>6</name>
        <sequence type="described" ref="VSP_038428 VSP_038429 VSP_038431"/>
    </isoform>
    <isoform>
        <id>Q8NDW8-7</id>
        <name>7</name>
        <sequence type="described" ref="VSP_038431"/>
    </isoform>
</comment>
<comment type="tissue specificity">
    <text evidence="2">Strongly expressed in testis.</text>
</comment>
<comment type="developmental stage">
    <text evidence="4">Expressed in preleptotene spermatocytes, pachytene spermatocytes, round spermatids and elongated spermatids (at protein level).</text>
</comment>
<comment type="disease" evidence="4">
    <disease id="DI-05556">
        <name>Spermatogenic failure 37</name>
        <acronym>SPGF37</acronym>
        <description>An autosomal recessive infertility disorder characterized by asthenoteratozoospermia. Spermatozoa exhibit multiple morphologic abnormalities, primarily consisting of short or absent flagella, and neck defects at the head-tail junction.</description>
        <dbReference type="MIM" id="618429"/>
    </disease>
    <text>The disease is caused by variants affecting the gene represented in this entry.</text>
</comment>
<comment type="similarity">
    <text evidence="8">Belongs to the TTC21 family.</text>
</comment>
<comment type="sequence caution" evidence="8">
    <conflict type="erroneous initiation">
        <sequence resource="EMBL-CDS" id="BAC04129"/>
    </conflict>
    <text>Truncated N-terminus.</text>
</comment>